<evidence type="ECO:0000255" key="1">
    <source>
        <dbReference type="HAMAP-Rule" id="MF_00298"/>
    </source>
</evidence>
<accession>A4VGL4</accession>
<comment type="function">
    <text evidence="1">Accelerates the degradation of transcripts by removing pyrophosphate from the 5'-end of triphosphorylated RNA, leading to a more labile monophosphorylated state that can stimulate subsequent ribonuclease cleavage.</text>
</comment>
<comment type="cofactor">
    <cofactor evidence="1">
        <name>a divalent metal cation</name>
        <dbReference type="ChEBI" id="CHEBI:60240"/>
    </cofactor>
</comment>
<comment type="similarity">
    <text evidence="1">Belongs to the Nudix hydrolase family. RppH subfamily.</text>
</comment>
<sequence length="159" mass="18752">MIDSDGFRPNVGIILTNDVGQVLWARRINQDAWQFPQGGINARETPEEALFRELNEEVGLEEQDVKILACTRGWLRYRLPQRLVRTHSQPLCIGQKQKWFLLRLTGAEDRVRMDLTGKPEFDGWRWVSYWYPLGQVVTFKREVYRRALKELAPRLPVRD</sequence>
<reference key="1">
    <citation type="journal article" date="2008" name="Proc. Natl. Acad. Sci. U.S.A.">
        <title>Nitrogen fixation island and rhizosphere competence traits in the genome of root-associated Pseudomonas stutzeri A1501.</title>
        <authorList>
            <person name="Yan Y."/>
            <person name="Yang J."/>
            <person name="Dou Y."/>
            <person name="Chen M."/>
            <person name="Ping S."/>
            <person name="Peng J."/>
            <person name="Lu W."/>
            <person name="Zhang W."/>
            <person name="Yao Z."/>
            <person name="Li H."/>
            <person name="Liu W."/>
            <person name="He S."/>
            <person name="Geng L."/>
            <person name="Zhang X."/>
            <person name="Yang F."/>
            <person name="Yu H."/>
            <person name="Zhan Y."/>
            <person name="Li D."/>
            <person name="Lin Z."/>
            <person name="Wang Y."/>
            <person name="Elmerich C."/>
            <person name="Lin M."/>
            <person name="Jin Q."/>
        </authorList>
    </citation>
    <scope>NUCLEOTIDE SEQUENCE [LARGE SCALE GENOMIC DNA]</scope>
    <source>
        <strain>A1501</strain>
    </source>
</reference>
<name>RPPH_STUS1</name>
<gene>
    <name evidence="1" type="primary">rppH</name>
    <name evidence="1" type="synonym">nudH</name>
    <name type="ordered locus">PST_0409</name>
</gene>
<feature type="chain" id="PRO_1000021975" description="RNA pyrophosphohydrolase">
    <location>
        <begin position="1"/>
        <end position="159"/>
    </location>
</feature>
<feature type="domain" description="Nudix hydrolase" evidence="1">
    <location>
        <begin position="6"/>
        <end position="149"/>
    </location>
</feature>
<feature type="short sequence motif" description="Nudix box">
    <location>
        <begin position="38"/>
        <end position="59"/>
    </location>
</feature>
<dbReference type="EC" id="3.6.1.-" evidence="1"/>
<dbReference type="EMBL" id="CP000304">
    <property type="protein sequence ID" value="ABP78115.1"/>
    <property type="molecule type" value="Genomic_DNA"/>
</dbReference>
<dbReference type="RefSeq" id="WP_011911645.1">
    <property type="nucleotide sequence ID" value="NC_009434.1"/>
</dbReference>
<dbReference type="SMR" id="A4VGL4"/>
<dbReference type="KEGG" id="psa:PST_0409"/>
<dbReference type="eggNOG" id="COG0494">
    <property type="taxonomic scope" value="Bacteria"/>
</dbReference>
<dbReference type="HOGENOM" id="CLU_087195_3_1_6"/>
<dbReference type="Proteomes" id="UP000000233">
    <property type="component" value="Chromosome"/>
</dbReference>
<dbReference type="GO" id="GO:0005737">
    <property type="term" value="C:cytoplasm"/>
    <property type="evidence" value="ECO:0007669"/>
    <property type="project" value="TreeGrafter"/>
</dbReference>
<dbReference type="GO" id="GO:0034353">
    <property type="term" value="F:mRNA 5'-diphosphatase activity"/>
    <property type="evidence" value="ECO:0007669"/>
    <property type="project" value="TreeGrafter"/>
</dbReference>
<dbReference type="GO" id="GO:0006402">
    <property type="term" value="P:mRNA catabolic process"/>
    <property type="evidence" value="ECO:0007669"/>
    <property type="project" value="TreeGrafter"/>
</dbReference>
<dbReference type="CDD" id="cd03671">
    <property type="entry name" value="NUDIX_Ap4A_hydrolase_plant_like"/>
    <property type="match status" value="1"/>
</dbReference>
<dbReference type="FunFam" id="3.90.79.10:FF:000001">
    <property type="entry name" value="RNA pyrophosphohydrolase"/>
    <property type="match status" value="1"/>
</dbReference>
<dbReference type="Gene3D" id="3.90.79.10">
    <property type="entry name" value="Nucleoside Triphosphate Pyrophosphohydrolase"/>
    <property type="match status" value="1"/>
</dbReference>
<dbReference type="HAMAP" id="MF_00298">
    <property type="entry name" value="Nudix_RppH"/>
    <property type="match status" value="1"/>
</dbReference>
<dbReference type="InterPro" id="IPR020476">
    <property type="entry name" value="Nudix_hydrolase"/>
</dbReference>
<dbReference type="InterPro" id="IPR015797">
    <property type="entry name" value="NUDIX_hydrolase-like_dom_sf"/>
</dbReference>
<dbReference type="InterPro" id="IPR020084">
    <property type="entry name" value="NUDIX_hydrolase_CS"/>
</dbReference>
<dbReference type="InterPro" id="IPR000086">
    <property type="entry name" value="NUDIX_hydrolase_dom"/>
</dbReference>
<dbReference type="InterPro" id="IPR022927">
    <property type="entry name" value="RppH"/>
</dbReference>
<dbReference type="NCBIfam" id="NF001934">
    <property type="entry name" value="PRK00714.1-1"/>
    <property type="match status" value="1"/>
</dbReference>
<dbReference type="NCBIfam" id="NF001937">
    <property type="entry name" value="PRK00714.1-4"/>
    <property type="match status" value="1"/>
</dbReference>
<dbReference type="NCBIfam" id="NF001938">
    <property type="entry name" value="PRK00714.1-5"/>
    <property type="match status" value="1"/>
</dbReference>
<dbReference type="PANTHER" id="PTHR23114">
    <property type="entry name" value="M7GPPPN-MRNA HYDROLASE"/>
    <property type="match status" value="1"/>
</dbReference>
<dbReference type="PANTHER" id="PTHR23114:SF17">
    <property type="entry name" value="M7GPPPN-MRNA HYDROLASE"/>
    <property type="match status" value="1"/>
</dbReference>
<dbReference type="Pfam" id="PF00293">
    <property type="entry name" value="NUDIX"/>
    <property type="match status" value="1"/>
</dbReference>
<dbReference type="PRINTS" id="PR00502">
    <property type="entry name" value="NUDIXFAMILY"/>
</dbReference>
<dbReference type="SUPFAM" id="SSF55811">
    <property type="entry name" value="Nudix"/>
    <property type="match status" value="1"/>
</dbReference>
<dbReference type="PROSITE" id="PS51462">
    <property type="entry name" value="NUDIX"/>
    <property type="match status" value="1"/>
</dbReference>
<dbReference type="PROSITE" id="PS00893">
    <property type="entry name" value="NUDIX_BOX"/>
    <property type="match status" value="1"/>
</dbReference>
<protein>
    <recommendedName>
        <fullName evidence="1">RNA pyrophosphohydrolase</fullName>
        <ecNumber evidence="1">3.6.1.-</ecNumber>
    </recommendedName>
    <alternativeName>
        <fullName evidence="1">(Di)nucleoside polyphosphate hydrolase</fullName>
    </alternativeName>
</protein>
<keyword id="KW-0378">Hydrolase</keyword>
<keyword id="KW-1185">Reference proteome</keyword>
<proteinExistence type="inferred from homology"/>
<organism>
    <name type="scientific">Stutzerimonas stutzeri (strain A1501)</name>
    <name type="common">Pseudomonas stutzeri</name>
    <dbReference type="NCBI Taxonomy" id="379731"/>
    <lineage>
        <taxon>Bacteria</taxon>
        <taxon>Pseudomonadati</taxon>
        <taxon>Pseudomonadota</taxon>
        <taxon>Gammaproteobacteria</taxon>
        <taxon>Pseudomonadales</taxon>
        <taxon>Pseudomonadaceae</taxon>
        <taxon>Stutzerimonas</taxon>
    </lineage>
</organism>